<gene>
    <name evidence="1" type="primary">pepA</name>
    <name type="ordered locus">CPE2501</name>
</gene>
<name>AMPA_CLOPE</name>
<accession>Q8XHI3</accession>
<dbReference type="EC" id="3.4.11.1" evidence="1"/>
<dbReference type="EC" id="3.4.11.10" evidence="1"/>
<dbReference type="EMBL" id="BA000016">
    <property type="protein sequence ID" value="BAB82207.1"/>
    <property type="molecule type" value="Genomic_DNA"/>
</dbReference>
<dbReference type="RefSeq" id="WP_011010933.1">
    <property type="nucleotide sequence ID" value="NC_003366.1"/>
</dbReference>
<dbReference type="SMR" id="Q8XHI3"/>
<dbReference type="STRING" id="195102.gene:10491835"/>
<dbReference type="KEGG" id="cpe:CPE2501"/>
<dbReference type="HOGENOM" id="CLU_013734_6_3_9"/>
<dbReference type="Proteomes" id="UP000000818">
    <property type="component" value="Chromosome"/>
</dbReference>
<dbReference type="GO" id="GO:0005737">
    <property type="term" value="C:cytoplasm"/>
    <property type="evidence" value="ECO:0007669"/>
    <property type="project" value="UniProtKB-SubCell"/>
</dbReference>
<dbReference type="GO" id="GO:0030145">
    <property type="term" value="F:manganese ion binding"/>
    <property type="evidence" value="ECO:0007669"/>
    <property type="project" value="UniProtKB-UniRule"/>
</dbReference>
<dbReference type="GO" id="GO:0070006">
    <property type="term" value="F:metalloaminopeptidase activity"/>
    <property type="evidence" value="ECO:0007669"/>
    <property type="project" value="InterPro"/>
</dbReference>
<dbReference type="GO" id="GO:0006508">
    <property type="term" value="P:proteolysis"/>
    <property type="evidence" value="ECO:0007669"/>
    <property type="project" value="UniProtKB-KW"/>
</dbReference>
<dbReference type="CDD" id="cd00433">
    <property type="entry name" value="Peptidase_M17"/>
    <property type="match status" value="1"/>
</dbReference>
<dbReference type="Gene3D" id="3.40.220.10">
    <property type="entry name" value="Leucine Aminopeptidase, subunit E, domain 1"/>
    <property type="match status" value="1"/>
</dbReference>
<dbReference type="Gene3D" id="3.40.630.10">
    <property type="entry name" value="Zn peptidases"/>
    <property type="match status" value="1"/>
</dbReference>
<dbReference type="HAMAP" id="MF_00181">
    <property type="entry name" value="Cytosol_peptidase_M17"/>
    <property type="match status" value="1"/>
</dbReference>
<dbReference type="InterPro" id="IPR011356">
    <property type="entry name" value="Leucine_aapep/pepB"/>
</dbReference>
<dbReference type="InterPro" id="IPR043472">
    <property type="entry name" value="Macro_dom-like"/>
</dbReference>
<dbReference type="InterPro" id="IPR000819">
    <property type="entry name" value="Peptidase_M17_C"/>
</dbReference>
<dbReference type="InterPro" id="IPR023042">
    <property type="entry name" value="Peptidase_M17_leu_NH2_pept"/>
</dbReference>
<dbReference type="InterPro" id="IPR008283">
    <property type="entry name" value="Peptidase_M17_N"/>
</dbReference>
<dbReference type="NCBIfam" id="NF002073">
    <property type="entry name" value="PRK00913.1-2"/>
    <property type="match status" value="1"/>
</dbReference>
<dbReference type="NCBIfam" id="NF002074">
    <property type="entry name" value="PRK00913.1-4"/>
    <property type="match status" value="1"/>
</dbReference>
<dbReference type="NCBIfam" id="NF002083">
    <property type="entry name" value="PRK00913.3-5"/>
    <property type="match status" value="1"/>
</dbReference>
<dbReference type="PANTHER" id="PTHR11963:SF23">
    <property type="entry name" value="CYTOSOL AMINOPEPTIDASE"/>
    <property type="match status" value="1"/>
</dbReference>
<dbReference type="PANTHER" id="PTHR11963">
    <property type="entry name" value="LEUCINE AMINOPEPTIDASE-RELATED"/>
    <property type="match status" value="1"/>
</dbReference>
<dbReference type="Pfam" id="PF00883">
    <property type="entry name" value="Peptidase_M17"/>
    <property type="match status" value="1"/>
</dbReference>
<dbReference type="Pfam" id="PF02789">
    <property type="entry name" value="Peptidase_M17_N"/>
    <property type="match status" value="1"/>
</dbReference>
<dbReference type="PRINTS" id="PR00481">
    <property type="entry name" value="LAMNOPPTDASE"/>
</dbReference>
<dbReference type="SUPFAM" id="SSF52949">
    <property type="entry name" value="Macro domain-like"/>
    <property type="match status" value="1"/>
</dbReference>
<dbReference type="SUPFAM" id="SSF53187">
    <property type="entry name" value="Zn-dependent exopeptidases"/>
    <property type="match status" value="1"/>
</dbReference>
<dbReference type="PROSITE" id="PS00631">
    <property type="entry name" value="CYTOSOL_AP"/>
    <property type="match status" value="1"/>
</dbReference>
<reference key="1">
    <citation type="journal article" date="2002" name="Proc. Natl. Acad. Sci. U.S.A.">
        <title>Complete genome sequence of Clostridium perfringens, an anaerobic flesh-eater.</title>
        <authorList>
            <person name="Shimizu T."/>
            <person name="Ohtani K."/>
            <person name="Hirakawa H."/>
            <person name="Ohshima K."/>
            <person name="Yamashita A."/>
            <person name="Shiba T."/>
            <person name="Ogasawara N."/>
            <person name="Hattori M."/>
            <person name="Kuhara S."/>
            <person name="Hayashi H."/>
        </authorList>
    </citation>
    <scope>NUCLEOTIDE SEQUENCE [LARGE SCALE GENOMIC DNA]</scope>
    <source>
        <strain>13 / Type A</strain>
    </source>
</reference>
<protein>
    <recommendedName>
        <fullName evidence="1">Probable cytosol aminopeptidase</fullName>
        <ecNumber evidence="1">3.4.11.1</ecNumber>
    </recommendedName>
    <alternativeName>
        <fullName evidence="1">Leucine aminopeptidase</fullName>
        <shortName evidence="1">LAP</shortName>
        <ecNumber evidence="1">3.4.11.10</ecNumber>
    </alternativeName>
    <alternativeName>
        <fullName evidence="1">Leucyl aminopeptidase</fullName>
    </alternativeName>
</protein>
<proteinExistence type="inferred from homology"/>
<evidence type="ECO:0000255" key="1">
    <source>
        <dbReference type="HAMAP-Rule" id="MF_00181"/>
    </source>
</evidence>
<sequence length="493" mass="54307">MYNFLVKKSKCTETDALLIPYFEEKTNIPNEEINNKINILKKKEQFKGSYGEIFNITRTTDDNIQDIILLGLGKETEITKEKIRRAFGKAVNEIKRLKSKSVFLRFDSVEAIGLENTLKAMVEGLALGSYSFNKYKSDKKEEVEVTVHIGGHNINEEEVELCEKAIDEAMLLSETTCLARDLVNEPANNMYPETLAKEVKNIGSKYGFEVEVFDENQIEELKMESFLSVGKGSDNLPRLIVMRYFGDKDNMDQRLALVGKGLTYDSGGYSLKTNAGMVTMKADMGGAASVIGAISAIAKRNLKINVIAVVAACENLISGHAYKPGDIIGSMEGKTIEILNTDAEGRLTLIDAVTYAIEKEKASEIIDVATLTGAAVVSLGEDVTAVITNKDEFYGELREASYETGEKVWQMPSFEDYGKLIKSNIADLKNIGGKYAGTITAGLFIGEFIQNKPWLHLDIAGPAFSEKKGDYCPTGGTGAGVRTLYELANRRCK</sequence>
<comment type="function">
    <text evidence="1">Presumably involved in the processing and regular turnover of intracellular proteins. Catalyzes the removal of unsubstituted N-terminal amino acids from various peptides.</text>
</comment>
<comment type="catalytic activity">
    <reaction evidence="1">
        <text>Release of an N-terminal amino acid, Xaa-|-Yaa-, in which Xaa is preferably Leu, but may be other amino acids including Pro although not Arg or Lys, and Yaa may be Pro. Amino acid amides and methyl esters are also readily hydrolyzed, but rates on arylamides are exceedingly low.</text>
        <dbReference type="EC" id="3.4.11.1"/>
    </reaction>
</comment>
<comment type="catalytic activity">
    <reaction evidence="1">
        <text>Release of an N-terminal amino acid, preferentially leucine, but not glutamic or aspartic acids.</text>
        <dbReference type="EC" id="3.4.11.10"/>
    </reaction>
</comment>
<comment type="cofactor">
    <cofactor evidence="1">
        <name>Mn(2+)</name>
        <dbReference type="ChEBI" id="CHEBI:29035"/>
    </cofactor>
    <text evidence="1">Binds 2 manganese ions per subunit.</text>
</comment>
<comment type="subcellular location">
    <subcellularLocation>
        <location evidence="1">Cytoplasm</location>
    </subcellularLocation>
</comment>
<comment type="similarity">
    <text evidence="1">Belongs to the peptidase M17 family.</text>
</comment>
<organism>
    <name type="scientific">Clostridium perfringens (strain 13 / Type A)</name>
    <dbReference type="NCBI Taxonomy" id="195102"/>
    <lineage>
        <taxon>Bacteria</taxon>
        <taxon>Bacillati</taxon>
        <taxon>Bacillota</taxon>
        <taxon>Clostridia</taxon>
        <taxon>Eubacteriales</taxon>
        <taxon>Clostridiaceae</taxon>
        <taxon>Clostridium</taxon>
    </lineage>
</organism>
<feature type="chain" id="PRO_0000165743" description="Probable cytosol aminopeptidase">
    <location>
        <begin position="1"/>
        <end position="493"/>
    </location>
</feature>
<feature type="active site" evidence="1">
    <location>
        <position position="272"/>
    </location>
</feature>
<feature type="active site" evidence="1">
    <location>
        <position position="346"/>
    </location>
</feature>
<feature type="binding site" evidence="1">
    <location>
        <position position="260"/>
    </location>
    <ligand>
        <name>Mn(2+)</name>
        <dbReference type="ChEBI" id="CHEBI:29035"/>
        <label>2</label>
    </ligand>
</feature>
<feature type="binding site" evidence="1">
    <location>
        <position position="265"/>
    </location>
    <ligand>
        <name>Mn(2+)</name>
        <dbReference type="ChEBI" id="CHEBI:29035"/>
        <label>1</label>
    </ligand>
</feature>
<feature type="binding site" evidence="1">
    <location>
        <position position="265"/>
    </location>
    <ligand>
        <name>Mn(2+)</name>
        <dbReference type="ChEBI" id="CHEBI:29035"/>
        <label>2</label>
    </ligand>
</feature>
<feature type="binding site" evidence="1">
    <location>
        <position position="283"/>
    </location>
    <ligand>
        <name>Mn(2+)</name>
        <dbReference type="ChEBI" id="CHEBI:29035"/>
        <label>2</label>
    </ligand>
</feature>
<feature type="binding site" evidence="1">
    <location>
        <position position="342"/>
    </location>
    <ligand>
        <name>Mn(2+)</name>
        <dbReference type="ChEBI" id="CHEBI:29035"/>
        <label>1</label>
    </ligand>
</feature>
<feature type="binding site" evidence="1">
    <location>
        <position position="344"/>
    </location>
    <ligand>
        <name>Mn(2+)</name>
        <dbReference type="ChEBI" id="CHEBI:29035"/>
        <label>1</label>
    </ligand>
</feature>
<feature type="binding site" evidence="1">
    <location>
        <position position="344"/>
    </location>
    <ligand>
        <name>Mn(2+)</name>
        <dbReference type="ChEBI" id="CHEBI:29035"/>
        <label>2</label>
    </ligand>
</feature>
<keyword id="KW-0031">Aminopeptidase</keyword>
<keyword id="KW-0963">Cytoplasm</keyword>
<keyword id="KW-0378">Hydrolase</keyword>
<keyword id="KW-0464">Manganese</keyword>
<keyword id="KW-0479">Metal-binding</keyword>
<keyword id="KW-0645">Protease</keyword>
<keyword id="KW-1185">Reference proteome</keyword>